<keyword id="KW-0021">Allosteric enzyme</keyword>
<keyword id="KW-0328">Glycosyltransferase</keyword>
<keyword id="KW-0342">GTP-binding</keyword>
<keyword id="KW-0460">Magnesium</keyword>
<keyword id="KW-0547">Nucleotide-binding</keyword>
<keyword id="KW-1185">Reference proteome</keyword>
<keyword id="KW-0808">Transferase</keyword>
<feature type="chain" id="PRO_1000164819" description="Uracil phosphoribosyltransferase">
    <location>
        <begin position="1"/>
        <end position="211"/>
    </location>
</feature>
<feature type="binding site" evidence="1">
    <location>
        <position position="77"/>
    </location>
    <ligand>
        <name>5-phospho-alpha-D-ribose 1-diphosphate</name>
        <dbReference type="ChEBI" id="CHEBI:58017"/>
    </ligand>
</feature>
<feature type="binding site" evidence="1">
    <location>
        <position position="102"/>
    </location>
    <ligand>
        <name>5-phospho-alpha-D-ribose 1-diphosphate</name>
        <dbReference type="ChEBI" id="CHEBI:58017"/>
    </ligand>
</feature>
<feature type="binding site" evidence="1">
    <location>
        <begin position="129"/>
        <end position="137"/>
    </location>
    <ligand>
        <name>5-phospho-alpha-D-ribose 1-diphosphate</name>
        <dbReference type="ChEBI" id="CHEBI:58017"/>
    </ligand>
</feature>
<feature type="binding site" evidence="1">
    <location>
        <position position="192"/>
    </location>
    <ligand>
        <name>uracil</name>
        <dbReference type="ChEBI" id="CHEBI:17568"/>
    </ligand>
</feature>
<feature type="binding site" evidence="1">
    <location>
        <begin position="197"/>
        <end position="199"/>
    </location>
    <ligand>
        <name>uracil</name>
        <dbReference type="ChEBI" id="CHEBI:17568"/>
    </ligand>
</feature>
<feature type="binding site" evidence="1">
    <location>
        <position position="198"/>
    </location>
    <ligand>
        <name>5-phospho-alpha-D-ribose 1-diphosphate</name>
        <dbReference type="ChEBI" id="CHEBI:58017"/>
    </ligand>
</feature>
<protein>
    <recommendedName>
        <fullName evidence="1">Uracil phosphoribosyltransferase</fullName>
        <ecNumber evidence="1">2.4.2.9</ecNumber>
    </recommendedName>
    <alternativeName>
        <fullName evidence="1">UMP pyrophosphorylase</fullName>
    </alternativeName>
    <alternativeName>
        <fullName evidence="1">UPRTase</fullName>
    </alternativeName>
</protein>
<comment type="function">
    <text evidence="1">Catalyzes the conversion of uracil and 5-phospho-alpha-D-ribose 1-diphosphate (PRPP) to UMP and diphosphate.</text>
</comment>
<comment type="catalytic activity">
    <reaction evidence="1">
        <text>UMP + diphosphate = 5-phospho-alpha-D-ribose 1-diphosphate + uracil</text>
        <dbReference type="Rhea" id="RHEA:13017"/>
        <dbReference type="ChEBI" id="CHEBI:17568"/>
        <dbReference type="ChEBI" id="CHEBI:33019"/>
        <dbReference type="ChEBI" id="CHEBI:57865"/>
        <dbReference type="ChEBI" id="CHEBI:58017"/>
        <dbReference type="EC" id="2.4.2.9"/>
    </reaction>
</comment>
<comment type="cofactor">
    <cofactor evidence="1">
        <name>Mg(2+)</name>
        <dbReference type="ChEBI" id="CHEBI:18420"/>
    </cofactor>
    <text evidence="1">Binds 1 Mg(2+) ion per subunit. The magnesium is bound as Mg-PRPP.</text>
</comment>
<comment type="activity regulation">
    <text evidence="1">Allosterically activated by GTP.</text>
</comment>
<comment type="pathway">
    <text evidence="1">Pyrimidine metabolism; UMP biosynthesis via salvage pathway; UMP from uracil: step 1/1.</text>
</comment>
<comment type="similarity">
    <text evidence="1">Belongs to the UPRTase family.</text>
</comment>
<sequence length="211" mass="22412">MDIHVVDHPLAASRLTLMRDARSDNTAFRAALRDLGTMLVYEAARDLPVEHFDCVTPVATAEGTRLQNPPIIVPIIRAGLGMIDPALSMIPDAQVGFIGMARDEETHEPVPYLEALPEDLSGRSVFVVDPMLATGGSLLHSLKLLADRGATDITAICMVSAQPGVDALANSGLPVRLVTAAIDPALNEDAYIVPGLGDAGDRLYGPRNIDL</sequence>
<dbReference type="EC" id="2.4.2.9" evidence="1"/>
<dbReference type="EMBL" id="CP001601">
    <property type="protein sequence ID" value="ACP32134.1"/>
    <property type="molecule type" value="Genomic_DNA"/>
</dbReference>
<dbReference type="RefSeq" id="WP_010189385.1">
    <property type="nucleotide sequence ID" value="NZ_ACLH01000061.1"/>
</dbReference>
<dbReference type="SMR" id="C3PLD0"/>
<dbReference type="STRING" id="548476.cauri_0537"/>
<dbReference type="GeneID" id="31923157"/>
<dbReference type="KEGG" id="car:cauri_0537"/>
<dbReference type="eggNOG" id="COG0035">
    <property type="taxonomic scope" value="Bacteria"/>
</dbReference>
<dbReference type="HOGENOM" id="CLU_067096_2_3_11"/>
<dbReference type="OrthoDB" id="9781675at2"/>
<dbReference type="UniPathway" id="UPA00574">
    <property type="reaction ID" value="UER00636"/>
</dbReference>
<dbReference type="Proteomes" id="UP000002077">
    <property type="component" value="Chromosome"/>
</dbReference>
<dbReference type="GO" id="GO:0005525">
    <property type="term" value="F:GTP binding"/>
    <property type="evidence" value="ECO:0007669"/>
    <property type="project" value="UniProtKB-KW"/>
</dbReference>
<dbReference type="GO" id="GO:0000287">
    <property type="term" value="F:magnesium ion binding"/>
    <property type="evidence" value="ECO:0007669"/>
    <property type="project" value="UniProtKB-UniRule"/>
</dbReference>
<dbReference type="GO" id="GO:0004845">
    <property type="term" value="F:uracil phosphoribosyltransferase activity"/>
    <property type="evidence" value="ECO:0007669"/>
    <property type="project" value="UniProtKB-UniRule"/>
</dbReference>
<dbReference type="GO" id="GO:0044206">
    <property type="term" value="P:UMP salvage"/>
    <property type="evidence" value="ECO:0007669"/>
    <property type="project" value="UniProtKB-UniRule"/>
</dbReference>
<dbReference type="GO" id="GO:0006223">
    <property type="term" value="P:uracil salvage"/>
    <property type="evidence" value="ECO:0007669"/>
    <property type="project" value="InterPro"/>
</dbReference>
<dbReference type="CDD" id="cd06223">
    <property type="entry name" value="PRTases_typeI"/>
    <property type="match status" value="1"/>
</dbReference>
<dbReference type="FunFam" id="3.40.50.2020:FF:000003">
    <property type="entry name" value="Uracil phosphoribosyltransferase"/>
    <property type="match status" value="1"/>
</dbReference>
<dbReference type="Gene3D" id="3.40.50.2020">
    <property type="match status" value="1"/>
</dbReference>
<dbReference type="HAMAP" id="MF_01218_B">
    <property type="entry name" value="Upp_B"/>
    <property type="match status" value="1"/>
</dbReference>
<dbReference type="InterPro" id="IPR000836">
    <property type="entry name" value="PRibTrfase_dom"/>
</dbReference>
<dbReference type="InterPro" id="IPR029057">
    <property type="entry name" value="PRTase-like"/>
</dbReference>
<dbReference type="InterPro" id="IPR034332">
    <property type="entry name" value="Upp_B"/>
</dbReference>
<dbReference type="InterPro" id="IPR050054">
    <property type="entry name" value="UPRTase/APRTase"/>
</dbReference>
<dbReference type="InterPro" id="IPR005765">
    <property type="entry name" value="Ura_phspho_trans"/>
</dbReference>
<dbReference type="NCBIfam" id="NF001097">
    <property type="entry name" value="PRK00129.1"/>
    <property type="match status" value="1"/>
</dbReference>
<dbReference type="NCBIfam" id="TIGR01091">
    <property type="entry name" value="upp"/>
    <property type="match status" value="1"/>
</dbReference>
<dbReference type="PANTHER" id="PTHR32315">
    <property type="entry name" value="ADENINE PHOSPHORIBOSYLTRANSFERASE"/>
    <property type="match status" value="1"/>
</dbReference>
<dbReference type="PANTHER" id="PTHR32315:SF4">
    <property type="entry name" value="URACIL PHOSPHORIBOSYLTRANSFERASE, CHLOROPLASTIC"/>
    <property type="match status" value="1"/>
</dbReference>
<dbReference type="Pfam" id="PF14681">
    <property type="entry name" value="UPRTase"/>
    <property type="match status" value="1"/>
</dbReference>
<dbReference type="SUPFAM" id="SSF53271">
    <property type="entry name" value="PRTase-like"/>
    <property type="match status" value="1"/>
</dbReference>
<reference key="1">
    <citation type="journal article" date="2010" name="BMC Genomics">
        <title>Complete genome sequence and lifestyle of black-pigmented Corynebacterium aurimucosum ATCC 700975 (formerly C. nigricans CN-1) isolated from a vaginal swab of a woman with spontaneous abortion.</title>
        <authorList>
            <person name="Trost E."/>
            <person name="Gotker S."/>
            <person name="Schneider J."/>
            <person name="Schneiker-Bekel S."/>
            <person name="Szczepanowski R."/>
            <person name="Tilker A."/>
            <person name="Viehoever P."/>
            <person name="Arnold W."/>
            <person name="Bekel T."/>
            <person name="Blom J."/>
            <person name="Gartemann K.H."/>
            <person name="Linke B."/>
            <person name="Goesmann A."/>
            <person name="Puhler A."/>
            <person name="Shukla S.K."/>
            <person name="Tauch A."/>
        </authorList>
    </citation>
    <scope>NUCLEOTIDE SEQUENCE [LARGE SCALE GENOMIC DNA]</scope>
    <source>
        <strain>ATCC 700975 / DSM 44827 / CIP 107346 / CN-1</strain>
    </source>
</reference>
<gene>
    <name evidence="1" type="primary">upp</name>
    <name type="ordered locus">cauri_0537</name>
</gene>
<name>UPP_CORA7</name>
<organism>
    <name type="scientific">Corynebacterium aurimucosum (strain ATCC 700975 / DSM 44827 / CIP 107346 / CN-1)</name>
    <name type="common">Corynebacterium nigricans</name>
    <dbReference type="NCBI Taxonomy" id="548476"/>
    <lineage>
        <taxon>Bacteria</taxon>
        <taxon>Bacillati</taxon>
        <taxon>Actinomycetota</taxon>
        <taxon>Actinomycetes</taxon>
        <taxon>Mycobacteriales</taxon>
        <taxon>Corynebacteriaceae</taxon>
        <taxon>Corynebacterium</taxon>
    </lineage>
</organism>
<proteinExistence type="inferred from homology"/>
<evidence type="ECO:0000255" key="1">
    <source>
        <dbReference type="HAMAP-Rule" id="MF_01218"/>
    </source>
</evidence>
<accession>C3PLD0</accession>